<reference key="1">
    <citation type="submission" date="2007-08" db="EMBL/GenBank/DDBJ databases">
        <authorList>
            <consortium name="The Citrobacter koseri Genome Sequencing Project"/>
            <person name="McClelland M."/>
            <person name="Sanderson E.K."/>
            <person name="Porwollik S."/>
            <person name="Spieth J."/>
            <person name="Clifton W.S."/>
            <person name="Latreille P."/>
            <person name="Courtney L."/>
            <person name="Wang C."/>
            <person name="Pepin K."/>
            <person name="Bhonagiri V."/>
            <person name="Nash W."/>
            <person name="Johnson M."/>
            <person name="Thiruvilangam P."/>
            <person name="Wilson R."/>
        </authorList>
    </citation>
    <scope>NUCLEOTIDE SEQUENCE [LARGE SCALE GENOMIC DNA]</scope>
    <source>
        <strain>ATCC BAA-895 / CDC 4225-83 / SGSC4696</strain>
    </source>
</reference>
<keyword id="KW-0028">Amino-acid biosynthesis</keyword>
<keyword id="KW-0055">Arginine biosynthesis</keyword>
<keyword id="KW-0067">ATP-binding</keyword>
<keyword id="KW-0963">Cytoplasm</keyword>
<keyword id="KW-0436">Ligase</keyword>
<keyword id="KW-0547">Nucleotide-binding</keyword>
<keyword id="KW-1185">Reference proteome</keyword>
<name>ASSY_CITK8</name>
<dbReference type="EC" id="6.3.4.5" evidence="1"/>
<dbReference type="EMBL" id="CP000822">
    <property type="protein sequence ID" value="ABV15626.1"/>
    <property type="molecule type" value="Genomic_DNA"/>
</dbReference>
<dbReference type="RefSeq" id="WP_012135306.1">
    <property type="nucleotide sequence ID" value="NC_009792.1"/>
</dbReference>
<dbReference type="SMR" id="A8AQ63"/>
<dbReference type="STRING" id="290338.CKO_04574"/>
<dbReference type="GeneID" id="45138116"/>
<dbReference type="KEGG" id="cko:CKO_04574"/>
<dbReference type="HOGENOM" id="CLU_032784_4_1_6"/>
<dbReference type="OrthoDB" id="9801641at2"/>
<dbReference type="UniPathway" id="UPA00068">
    <property type="reaction ID" value="UER00113"/>
</dbReference>
<dbReference type="Proteomes" id="UP000008148">
    <property type="component" value="Chromosome"/>
</dbReference>
<dbReference type="GO" id="GO:0005737">
    <property type="term" value="C:cytoplasm"/>
    <property type="evidence" value="ECO:0007669"/>
    <property type="project" value="UniProtKB-SubCell"/>
</dbReference>
<dbReference type="GO" id="GO:0004055">
    <property type="term" value="F:argininosuccinate synthase activity"/>
    <property type="evidence" value="ECO:0007669"/>
    <property type="project" value="UniProtKB-UniRule"/>
</dbReference>
<dbReference type="GO" id="GO:0005524">
    <property type="term" value="F:ATP binding"/>
    <property type="evidence" value="ECO:0007669"/>
    <property type="project" value="UniProtKB-UniRule"/>
</dbReference>
<dbReference type="GO" id="GO:0042803">
    <property type="term" value="F:protein homodimerization activity"/>
    <property type="evidence" value="ECO:0007669"/>
    <property type="project" value="InterPro"/>
</dbReference>
<dbReference type="GO" id="GO:0000053">
    <property type="term" value="P:argininosuccinate metabolic process"/>
    <property type="evidence" value="ECO:0007669"/>
    <property type="project" value="TreeGrafter"/>
</dbReference>
<dbReference type="GO" id="GO:0006526">
    <property type="term" value="P:L-arginine biosynthetic process"/>
    <property type="evidence" value="ECO:0007669"/>
    <property type="project" value="UniProtKB-UniRule"/>
</dbReference>
<dbReference type="GO" id="GO:0000050">
    <property type="term" value="P:urea cycle"/>
    <property type="evidence" value="ECO:0007669"/>
    <property type="project" value="TreeGrafter"/>
</dbReference>
<dbReference type="CDD" id="cd01999">
    <property type="entry name" value="ASS"/>
    <property type="match status" value="1"/>
</dbReference>
<dbReference type="FunFam" id="1.10.287.400:FF:000001">
    <property type="entry name" value="Argininosuccinate synthase"/>
    <property type="match status" value="1"/>
</dbReference>
<dbReference type="Gene3D" id="1.10.287.400">
    <property type="match status" value="1"/>
</dbReference>
<dbReference type="Gene3D" id="3.90.1260.10">
    <property type="entry name" value="Argininosuccinate synthetase, chain A, domain 2"/>
    <property type="match status" value="1"/>
</dbReference>
<dbReference type="Gene3D" id="3.40.50.620">
    <property type="entry name" value="HUPs"/>
    <property type="match status" value="1"/>
</dbReference>
<dbReference type="HAMAP" id="MF_00581">
    <property type="entry name" value="Arg_succ_synth_type2"/>
    <property type="match status" value="1"/>
</dbReference>
<dbReference type="InterPro" id="IPR023437">
    <property type="entry name" value="Arg_succ_synth_type2_subfam"/>
</dbReference>
<dbReference type="InterPro" id="IPR048268">
    <property type="entry name" value="Arginosuc_syn_C"/>
</dbReference>
<dbReference type="InterPro" id="IPR048267">
    <property type="entry name" value="Arginosuc_syn_N"/>
</dbReference>
<dbReference type="InterPro" id="IPR001518">
    <property type="entry name" value="Arginosuc_synth"/>
</dbReference>
<dbReference type="InterPro" id="IPR018223">
    <property type="entry name" value="Arginosuc_synth_CS"/>
</dbReference>
<dbReference type="InterPro" id="IPR023434">
    <property type="entry name" value="Arginosuc_synth_type_1_subfam"/>
</dbReference>
<dbReference type="InterPro" id="IPR024074">
    <property type="entry name" value="AS_cat/multimer_dom_body"/>
</dbReference>
<dbReference type="InterPro" id="IPR024073">
    <property type="entry name" value="AS_multimer_C_tail"/>
</dbReference>
<dbReference type="InterPro" id="IPR014729">
    <property type="entry name" value="Rossmann-like_a/b/a_fold"/>
</dbReference>
<dbReference type="NCBIfam" id="TIGR00032">
    <property type="entry name" value="argG"/>
    <property type="match status" value="1"/>
</dbReference>
<dbReference type="NCBIfam" id="NF003779">
    <property type="entry name" value="PRK05370.1"/>
    <property type="match status" value="1"/>
</dbReference>
<dbReference type="PANTHER" id="PTHR11587">
    <property type="entry name" value="ARGININOSUCCINATE SYNTHASE"/>
    <property type="match status" value="1"/>
</dbReference>
<dbReference type="PANTHER" id="PTHR11587:SF2">
    <property type="entry name" value="ARGININOSUCCINATE SYNTHASE"/>
    <property type="match status" value="1"/>
</dbReference>
<dbReference type="Pfam" id="PF20979">
    <property type="entry name" value="Arginosuc_syn_C"/>
    <property type="match status" value="1"/>
</dbReference>
<dbReference type="Pfam" id="PF00764">
    <property type="entry name" value="Arginosuc_synth"/>
    <property type="match status" value="1"/>
</dbReference>
<dbReference type="SUPFAM" id="SSF52402">
    <property type="entry name" value="Adenine nucleotide alpha hydrolases-like"/>
    <property type="match status" value="1"/>
</dbReference>
<dbReference type="SUPFAM" id="SSF69864">
    <property type="entry name" value="Argininosuccinate synthetase, C-terminal domain"/>
    <property type="match status" value="1"/>
</dbReference>
<dbReference type="PROSITE" id="PS00564">
    <property type="entry name" value="ARGININOSUCCIN_SYN_1"/>
    <property type="match status" value="1"/>
</dbReference>
<dbReference type="PROSITE" id="PS00565">
    <property type="entry name" value="ARGININOSUCCIN_SYN_2"/>
    <property type="match status" value="1"/>
</dbReference>
<organism>
    <name type="scientific">Citrobacter koseri (strain ATCC BAA-895 / CDC 4225-83 / SGSC4696)</name>
    <dbReference type="NCBI Taxonomy" id="290338"/>
    <lineage>
        <taxon>Bacteria</taxon>
        <taxon>Pseudomonadati</taxon>
        <taxon>Pseudomonadota</taxon>
        <taxon>Gammaproteobacteria</taxon>
        <taxon>Enterobacterales</taxon>
        <taxon>Enterobacteriaceae</taxon>
        <taxon>Citrobacter</taxon>
    </lineage>
</organism>
<proteinExistence type="inferred from homology"/>
<protein>
    <recommendedName>
        <fullName evidence="1">Argininosuccinate synthase</fullName>
        <ecNumber evidence="1">6.3.4.5</ecNumber>
    </recommendedName>
    <alternativeName>
        <fullName evidence="1">Citrulline--aspartate ligase</fullName>
    </alternativeName>
</protein>
<accession>A8AQ63</accession>
<sequence>MTTILKHLPVGQRIGIAFSGGLDTSAALLWMRQKGAVPYAYTANLGQPDEDDYDAIPRRAMEYGAENARLIDCRKQLVAEGIAAIQCGAFHNTTGGLTYFNTTPLGRAVTGTMLVAAMKEDGVNIWGDGSTYKGNDIERFYRYGLLTNAELQIYKPWLDTDFIDELGGRHEMSEFMIACGFDYKMSVEKAYSTDSNMLGATHEAKDLEFLNSSVKIVNPIMGVKFWDENVKIPAEEVTVRFEQGHPVALNGKTFSDDVELMLEANRIGGRHGLGMSDQIENRIIEAKSRGIYEAPGMALLHIAYERLLTGIHNEDTIEQYHAHGRQLGRLLYQGRWFDSQALMLRDGLQRWVASQITGEVTLELRRGNDYSILNTVSDNLTYKPERLTMEKGDSVFSPDDRIGQLTMRNLDITDTREKLFGYAQSGLLSASSATGLPQVENLENKGK</sequence>
<comment type="catalytic activity">
    <reaction evidence="1">
        <text>L-citrulline + L-aspartate + ATP = 2-(N(omega)-L-arginino)succinate + AMP + diphosphate + H(+)</text>
        <dbReference type="Rhea" id="RHEA:10932"/>
        <dbReference type="ChEBI" id="CHEBI:15378"/>
        <dbReference type="ChEBI" id="CHEBI:29991"/>
        <dbReference type="ChEBI" id="CHEBI:30616"/>
        <dbReference type="ChEBI" id="CHEBI:33019"/>
        <dbReference type="ChEBI" id="CHEBI:57472"/>
        <dbReference type="ChEBI" id="CHEBI:57743"/>
        <dbReference type="ChEBI" id="CHEBI:456215"/>
        <dbReference type="EC" id="6.3.4.5"/>
    </reaction>
</comment>
<comment type="pathway">
    <text evidence="1">Amino-acid biosynthesis; L-arginine biosynthesis; L-arginine from L-ornithine and carbamoyl phosphate: step 2/3.</text>
</comment>
<comment type="subunit">
    <text evidence="1">Homotetramer.</text>
</comment>
<comment type="subcellular location">
    <subcellularLocation>
        <location evidence="1">Cytoplasm</location>
    </subcellularLocation>
</comment>
<comment type="similarity">
    <text evidence="1">Belongs to the argininosuccinate synthase family. Type 2 subfamily.</text>
</comment>
<evidence type="ECO:0000255" key="1">
    <source>
        <dbReference type="HAMAP-Rule" id="MF_00581"/>
    </source>
</evidence>
<gene>
    <name evidence="1" type="primary">argG</name>
    <name type="ordered locus">CKO_04574</name>
</gene>
<feature type="chain" id="PRO_1000025420" description="Argininosuccinate synthase">
    <location>
        <begin position="1"/>
        <end position="447"/>
    </location>
</feature>
<feature type="binding site" evidence="1">
    <location>
        <begin position="17"/>
        <end position="25"/>
    </location>
    <ligand>
        <name>ATP</name>
        <dbReference type="ChEBI" id="CHEBI:30616"/>
    </ligand>
</feature>
<feature type="binding site" evidence="1">
    <location>
        <position position="43"/>
    </location>
    <ligand>
        <name>ATP</name>
        <dbReference type="ChEBI" id="CHEBI:30616"/>
    </ligand>
</feature>
<feature type="binding site" evidence="1">
    <location>
        <position position="99"/>
    </location>
    <ligand>
        <name>L-citrulline</name>
        <dbReference type="ChEBI" id="CHEBI:57743"/>
    </ligand>
</feature>
<feature type="binding site" evidence="1">
    <location>
        <position position="129"/>
    </location>
    <ligand>
        <name>ATP</name>
        <dbReference type="ChEBI" id="CHEBI:30616"/>
    </ligand>
</feature>
<feature type="binding site" evidence="1">
    <location>
        <position position="131"/>
    </location>
    <ligand>
        <name>ATP</name>
        <dbReference type="ChEBI" id="CHEBI:30616"/>
    </ligand>
</feature>
<feature type="binding site" evidence="1">
    <location>
        <position position="131"/>
    </location>
    <ligand>
        <name>L-aspartate</name>
        <dbReference type="ChEBI" id="CHEBI:29991"/>
    </ligand>
</feature>
<feature type="binding site" evidence="1">
    <location>
        <position position="135"/>
    </location>
    <ligand>
        <name>L-aspartate</name>
        <dbReference type="ChEBI" id="CHEBI:29991"/>
    </ligand>
</feature>
<feature type="binding site" evidence="1">
    <location>
        <position position="135"/>
    </location>
    <ligand>
        <name>L-citrulline</name>
        <dbReference type="ChEBI" id="CHEBI:57743"/>
    </ligand>
</feature>
<feature type="binding site" evidence="1">
    <location>
        <position position="136"/>
    </location>
    <ligand>
        <name>ATP</name>
        <dbReference type="ChEBI" id="CHEBI:30616"/>
    </ligand>
</feature>
<feature type="binding site" evidence="1">
    <location>
        <position position="136"/>
    </location>
    <ligand>
        <name>L-aspartate</name>
        <dbReference type="ChEBI" id="CHEBI:29991"/>
    </ligand>
</feature>
<feature type="binding site" evidence="1">
    <location>
        <position position="139"/>
    </location>
    <ligand>
        <name>L-citrulline</name>
        <dbReference type="ChEBI" id="CHEBI:57743"/>
    </ligand>
</feature>
<feature type="binding site" evidence="1">
    <location>
        <position position="192"/>
    </location>
    <ligand>
        <name>L-citrulline</name>
        <dbReference type="ChEBI" id="CHEBI:57743"/>
    </ligand>
</feature>
<feature type="binding site" evidence="1">
    <location>
        <position position="194"/>
    </location>
    <ligand>
        <name>ATP</name>
        <dbReference type="ChEBI" id="CHEBI:30616"/>
    </ligand>
</feature>
<feature type="binding site" evidence="1">
    <location>
        <position position="201"/>
    </location>
    <ligand>
        <name>L-citrulline</name>
        <dbReference type="ChEBI" id="CHEBI:57743"/>
    </ligand>
</feature>
<feature type="binding site" evidence="1">
    <location>
        <position position="203"/>
    </location>
    <ligand>
        <name>L-citrulline</name>
        <dbReference type="ChEBI" id="CHEBI:57743"/>
    </ligand>
</feature>
<feature type="binding site" evidence="1">
    <location>
        <position position="280"/>
    </location>
    <ligand>
        <name>L-citrulline</name>
        <dbReference type="ChEBI" id="CHEBI:57743"/>
    </ligand>
</feature>